<keyword id="KW-1185">Reference proteome</keyword>
<keyword id="KW-0687">Ribonucleoprotein</keyword>
<keyword id="KW-0689">Ribosomal protein</keyword>
<keyword id="KW-0694">RNA-binding</keyword>
<keyword id="KW-0699">rRNA-binding</keyword>
<accession>P66561</accession>
<accession>Q9JRD0</accession>
<proteinExistence type="inferred from homology"/>
<gene>
    <name evidence="1" type="primary">rpsD</name>
    <name type="ordered locus">NMB0167</name>
</gene>
<evidence type="ECO:0000255" key="1">
    <source>
        <dbReference type="HAMAP-Rule" id="MF_01306"/>
    </source>
</evidence>
<evidence type="ECO:0000305" key="2"/>
<name>RS4_NEIMB</name>
<protein>
    <recommendedName>
        <fullName evidence="1">Small ribosomal subunit protein uS4</fullName>
    </recommendedName>
    <alternativeName>
        <fullName evidence="2">30S ribosomal protein S4</fullName>
    </alternativeName>
</protein>
<comment type="function">
    <text evidence="1">One of the primary rRNA binding proteins, it binds directly to 16S rRNA where it nucleates assembly of the body of the 30S subunit.</text>
</comment>
<comment type="function">
    <text evidence="1">With S5 and S12 plays an important role in translational accuracy.</text>
</comment>
<comment type="subunit">
    <text evidence="1">Part of the 30S ribosomal subunit. Contacts protein S5. The interaction surface between S4 and S5 is involved in control of translational fidelity.</text>
</comment>
<comment type="similarity">
    <text evidence="1">Belongs to the universal ribosomal protein uS4 family.</text>
</comment>
<sequence length="206" mass="23250">MARYIGPKCKLARREGTDLFLKSARRSLDSKCKIDSAPGQHGAKKPRLSDYGLQLREKQKIRRIYGVLERQFRRYFAEADRRKGSTGELLLQLLESRLDNVVYRMGFGSTRAEARQLVSHKAIVVNGQVVNIPSFQVKAGDVVSVREKAKKQVRIQEALGLATQIGLPGWVSVDADKLEGVFKNMPDRSELTGDINEQLVVEFYSK</sequence>
<organism>
    <name type="scientific">Neisseria meningitidis serogroup B (strain ATCC BAA-335 / MC58)</name>
    <dbReference type="NCBI Taxonomy" id="122586"/>
    <lineage>
        <taxon>Bacteria</taxon>
        <taxon>Pseudomonadati</taxon>
        <taxon>Pseudomonadota</taxon>
        <taxon>Betaproteobacteria</taxon>
        <taxon>Neisseriales</taxon>
        <taxon>Neisseriaceae</taxon>
        <taxon>Neisseria</taxon>
    </lineage>
</organism>
<feature type="chain" id="PRO_0000132424" description="Small ribosomal subunit protein uS4">
    <location>
        <begin position="1"/>
        <end position="206"/>
    </location>
</feature>
<feature type="domain" description="S4 RNA-binding" evidence="1">
    <location>
        <begin position="96"/>
        <end position="157"/>
    </location>
</feature>
<reference key="1">
    <citation type="journal article" date="2000" name="Science">
        <title>Complete genome sequence of Neisseria meningitidis serogroup B strain MC58.</title>
        <authorList>
            <person name="Tettelin H."/>
            <person name="Saunders N.J."/>
            <person name="Heidelberg J.F."/>
            <person name="Jeffries A.C."/>
            <person name="Nelson K.E."/>
            <person name="Eisen J.A."/>
            <person name="Ketchum K.A."/>
            <person name="Hood D.W."/>
            <person name="Peden J.F."/>
            <person name="Dodson R.J."/>
            <person name="Nelson W.C."/>
            <person name="Gwinn M.L."/>
            <person name="DeBoy R.T."/>
            <person name="Peterson J.D."/>
            <person name="Hickey E.K."/>
            <person name="Haft D.H."/>
            <person name="Salzberg S.L."/>
            <person name="White O."/>
            <person name="Fleischmann R.D."/>
            <person name="Dougherty B.A."/>
            <person name="Mason T.M."/>
            <person name="Ciecko A."/>
            <person name="Parksey D.S."/>
            <person name="Blair E."/>
            <person name="Cittone H."/>
            <person name="Clark E.B."/>
            <person name="Cotton M.D."/>
            <person name="Utterback T.R."/>
            <person name="Khouri H.M."/>
            <person name="Qin H."/>
            <person name="Vamathevan J.J."/>
            <person name="Gill J."/>
            <person name="Scarlato V."/>
            <person name="Masignani V."/>
            <person name="Pizza M."/>
            <person name="Grandi G."/>
            <person name="Sun L."/>
            <person name="Smith H.O."/>
            <person name="Fraser C.M."/>
            <person name="Moxon E.R."/>
            <person name="Rappuoli R."/>
            <person name="Venter J.C."/>
        </authorList>
    </citation>
    <scope>NUCLEOTIDE SEQUENCE [LARGE SCALE GENOMIC DNA]</scope>
    <source>
        <strain>ATCC BAA-335 / MC58</strain>
    </source>
</reference>
<dbReference type="EMBL" id="AE002098">
    <property type="protein sequence ID" value="AAF40624.1"/>
    <property type="molecule type" value="Genomic_DNA"/>
</dbReference>
<dbReference type="PIR" id="G81229">
    <property type="entry name" value="G81229"/>
</dbReference>
<dbReference type="RefSeq" id="NP_273225.1">
    <property type="nucleotide sequence ID" value="NC_003112.2"/>
</dbReference>
<dbReference type="RefSeq" id="WP_002215455.1">
    <property type="nucleotide sequence ID" value="NC_003112.2"/>
</dbReference>
<dbReference type="SMR" id="P66561"/>
<dbReference type="FunCoup" id="P66561">
    <property type="interactions" value="645"/>
</dbReference>
<dbReference type="STRING" id="122586.NMB0167"/>
<dbReference type="PaxDb" id="122586-NMB0167"/>
<dbReference type="GeneID" id="93387242"/>
<dbReference type="KEGG" id="nme:NMB0167"/>
<dbReference type="PATRIC" id="fig|122586.8.peg.208"/>
<dbReference type="HOGENOM" id="CLU_092403_0_2_4"/>
<dbReference type="InParanoid" id="P66561"/>
<dbReference type="OrthoDB" id="9803672at2"/>
<dbReference type="Proteomes" id="UP000000425">
    <property type="component" value="Chromosome"/>
</dbReference>
<dbReference type="GO" id="GO:0015935">
    <property type="term" value="C:small ribosomal subunit"/>
    <property type="evidence" value="ECO:0000318"/>
    <property type="project" value="GO_Central"/>
</dbReference>
<dbReference type="GO" id="GO:0019843">
    <property type="term" value="F:rRNA binding"/>
    <property type="evidence" value="ECO:0000318"/>
    <property type="project" value="GO_Central"/>
</dbReference>
<dbReference type="GO" id="GO:0003735">
    <property type="term" value="F:structural constituent of ribosome"/>
    <property type="evidence" value="ECO:0000318"/>
    <property type="project" value="GO_Central"/>
</dbReference>
<dbReference type="GO" id="GO:0042274">
    <property type="term" value="P:ribosomal small subunit biogenesis"/>
    <property type="evidence" value="ECO:0000318"/>
    <property type="project" value="GO_Central"/>
</dbReference>
<dbReference type="GO" id="GO:0006412">
    <property type="term" value="P:translation"/>
    <property type="evidence" value="ECO:0007669"/>
    <property type="project" value="UniProtKB-UniRule"/>
</dbReference>
<dbReference type="CDD" id="cd00165">
    <property type="entry name" value="S4"/>
    <property type="match status" value="1"/>
</dbReference>
<dbReference type="FunFam" id="1.10.1050.10:FF:000001">
    <property type="entry name" value="30S ribosomal protein S4"/>
    <property type="match status" value="1"/>
</dbReference>
<dbReference type="FunFam" id="3.10.290.10:FF:000001">
    <property type="entry name" value="30S ribosomal protein S4"/>
    <property type="match status" value="1"/>
</dbReference>
<dbReference type="Gene3D" id="1.10.1050.10">
    <property type="entry name" value="Ribosomal Protein S4 Delta 41, Chain A, domain 1"/>
    <property type="match status" value="1"/>
</dbReference>
<dbReference type="Gene3D" id="3.10.290.10">
    <property type="entry name" value="RNA-binding S4 domain"/>
    <property type="match status" value="1"/>
</dbReference>
<dbReference type="HAMAP" id="MF_01306_B">
    <property type="entry name" value="Ribosomal_uS4_B"/>
    <property type="match status" value="1"/>
</dbReference>
<dbReference type="InterPro" id="IPR022801">
    <property type="entry name" value="Ribosomal_uS4"/>
</dbReference>
<dbReference type="InterPro" id="IPR005709">
    <property type="entry name" value="Ribosomal_uS4_bac-type"/>
</dbReference>
<dbReference type="InterPro" id="IPR018079">
    <property type="entry name" value="Ribosomal_uS4_CS"/>
</dbReference>
<dbReference type="InterPro" id="IPR001912">
    <property type="entry name" value="Ribosomal_uS4_N"/>
</dbReference>
<dbReference type="InterPro" id="IPR002942">
    <property type="entry name" value="S4_RNA-bd"/>
</dbReference>
<dbReference type="InterPro" id="IPR036986">
    <property type="entry name" value="S4_RNA-bd_sf"/>
</dbReference>
<dbReference type="NCBIfam" id="NF003717">
    <property type="entry name" value="PRK05327.1"/>
    <property type="match status" value="1"/>
</dbReference>
<dbReference type="NCBIfam" id="TIGR01017">
    <property type="entry name" value="rpsD_bact"/>
    <property type="match status" value="1"/>
</dbReference>
<dbReference type="PANTHER" id="PTHR11831">
    <property type="entry name" value="30S 40S RIBOSOMAL PROTEIN"/>
    <property type="match status" value="1"/>
</dbReference>
<dbReference type="PANTHER" id="PTHR11831:SF4">
    <property type="entry name" value="SMALL RIBOSOMAL SUBUNIT PROTEIN US4M"/>
    <property type="match status" value="1"/>
</dbReference>
<dbReference type="Pfam" id="PF00163">
    <property type="entry name" value="Ribosomal_S4"/>
    <property type="match status" value="1"/>
</dbReference>
<dbReference type="Pfam" id="PF01479">
    <property type="entry name" value="S4"/>
    <property type="match status" value="1"/>
</dbReference>
<dbReference type="SMART" id="SM01390">
    <property type="entry name" value="Ribosomal_S4"/>
    <property type="match status" value="1"/>
</dbReference>
<dbReference type="SMART" id="SM00363">
    <property type="entry name" value="S4"/>
    <property type="match status" value="1"/>
</dbReference>
<dbReference type="SUPFAM" id="SSF55174">
    <property type="entry name" value="Alpha-L RNA-binding motif"/>
    <property type="match status" value="1"/>
</dbReference>
<dbReference type="PROSITE" id="PS00632">
    <property type="entry name" value="RIBOSOMAL_S4"/>
    <property type="match status" value="1"/>
</dbReference>
<dbReference type="PROSITE" id="PS50889">
    <property type="entry name" value="S4"/>
    <property type="match status" value="1"/>
</dbReference>